<evidence type="ECO:0000255" key="1">
    <source>
        <dbReference type="HAMAP-Rule" id="MF_00151"/>
    </source>
</evidence>
<keyword id="KW-0067">ATP-binding</keyword>
<keyword id="KW-0173">Coenzyme A biosynthesis</keyword>
<keyword id="KW-0963">Cytoplasm</keyword>
<keyword id="KW-0460">Magnesium</keyword>
<keyword id="KW-0547">Nucleotide-binding</keyword>
<keyword id="KW-0548">Nucleotidyltransferase</keyword>
<keyword id="KW-0808">Transferase</keyword>
<reference key="1">
    <citation type="journal article" date="2004" name="Proc. Natl. Acad. Sci. U.S.A.">
        <title>Insights into the evolution of Yersinia pestis through whole-genome comparison with Yersinia pseudotuberculosis.</title>
        <authorList>
            <person name="Chain P.S.G."/>
            <person name="Carniel E."/>
            <person name="Larimer F.W."/>
            <person name="Lamerdin J."/>
            <person name="Stoutland P.O."/>
            <person name="Regala W.M."/>
            <person name="Georgescu A.M."/>
            <person name="Vergez L.M."/>
            <person name="Land M.L."/>
            <person name="Motin V.L."/>
            <person name="Brubaker R.R."/>
            <person name="Fowler J."/>
            <person name="Hinnebusch J."/>
            <person name="Marceau M."/>
            <person name="Medigue C."/>
            <person name="Simonet M."/>
            <person name="Chenal-Francisque V."/>
            <person name="Souza B."/>
            <person name="Dacheux D."/>
            <person name="Elliott J.M."/>
            <person name="Derbise A."/>
            <person name="Hauser L.J."/>
            <person name="Garcia E."/>
        </authorList>
    </citation>
    <scope>NUCLEOTIDE SEQUENCE [LARGE SCALE GENOMIC DNA]</scope>
    <source>
        <strain>IP32953</strain>
    </source>
</reference>
<organism>
    <name type="scientific">Yersinia pseudotuberculosis serotype I (strain IP32953)</name>
    <dbReference type="NCBI Taxonomy" id="273123"/>
    <lineage>
        <taxon>Bacteria</taxon>
        <taxon>Pseudomonadati</taxon>
        <taxon>Pseudomonadota</taxon>
        <taxon>Gammaproteobacteria</taxon>
        <taxon>Enterobacterales</taxon>
        <taxon>Yersiniaceae</taxon>
        <taxon>Yersinia</taxon>
    </lineage>
</organism>
<comment type="function">
    <text evidence="1">Reversibly transfers an adenylyl group from ATP to 4'-phosphopantetheine, yielding dephospho-CoA (dPCoA) and pyrophosphate.</text>
</comment>
<comment type="catalytic activity">
    <reaction evidence="1">
        <text>(R)-4'-phosphopantetheine + ATP + H(+) = 3'-dephospho-CoA + diphosphate</text>
        <dbReference type="Rhea" id="RHEA:19801"/>
        <dbReference type="ChEBI" id="CHEBI:15378"/>
        <dbReference type="ChEBI" id="CHEBI:30616"/>
        <dbReference type="ChEBI" id="CHEBI:33019"/>
        <dbReference type="ChEBI" id="CHEBI:57328"/>
        <dbReference type="ChEBI" id="CHEBI:61723"/>
        <dbReference type="EC" id="2.7.7.3"/>
    </reaction>
</comment>
<comment type="cofactor">
    <cofactor evidence="1">
        <name>Mg(2+)</name>
        <dbReference type="ChEBI" id="CHEBI:18420"/>
    </cofactor>
</comment>
<comment type="pathway">
    <text evidence="1">Cofactor biosynthesis; coenzyme A biosynthesis; CoA from (R)-pantothenate: step 4/5.</text>
</comment>
<comment type="subunit">
    <text evidence="1">Homohexamer.</text>
</comment>
<comment type="subcellular location">
    <subcellularLocation>
        <location evidence="1">Cytoplasm</location>
    </subcellularLocation>
</comment>
<comment type="similarity">
    <text evidence="1">Belongs to the bacterial CoaD family.</text>
</comment>
<protein>
    <recommendedName>
        <fullName evidence="1">Phosphopantetheine adenylyltransferase</fullName>
        <ecNumber evidence="1">2.7.7.3</ecNumber>
    </recommendedName>
    <alternativeName>
        <fullName evidence="1">Dephospho-CoA pyrophosphorylase</fullName>
    </alternativeName>
    <alternativeName>
        <fullName evidence="1">Pantetheine-phosphate adenylyltransferase</fullName>
        <shortName evidence="1">PPAT</shortName>
    </alternativeName>
</protein>
<proteinExistence type="inferred from homology"/>
<accession>Q66GD2</accession>
<sequence length="159" mass="17685">MITKAIYPGTFDPITNGHLDLVTRASAMFSHVILAIADSSSKKPMFTLDERVALAKKVTALLKNVEVLGFSELMAEFAKKHNANILVRGLRSVSDFEYEWQLANMNRHLMPKLESVFLMPSEKWSFISSSLVKEVARHGGDITPFLPKPVTKALLAKLA</sequence>
<name>COAD_YERPS</name>
<gene>
    <name evidence="1" type="primary">coaD</name>
    <name type="ordered locus">YPTB0050</name>
</gene>
<dbReference type="EC" id="2.7.7.3" evidence="1"/>
<dbReference type="EMBL" id="BX936398">
    <property type="protein sequence ID" value="CAH19290.1"/>
    <property type="molecule type" value="Genomic_DNA"/>
</dbReference>
<dbReference type="RefSeq" id="WP_011191449.1">
    <property type="nucleotide sequence ID" value="NC_006155.1"/>
</dbReference>
<dbReference type="SMR" id="Q66GD2"/>
<dbReference type="KEGG" id="ypo:BZ17_2545"/>
<dbReference type="KEGG" id="yps:YPTB0050"/>
<dbReference type="PATRIC" id="fig|273123.14.peg.2670"/>
<dbReference type="UniPathway" id="UPA00241">
    <property type="reaction ID" value="UER00355"/>
</dbReference>
<dbReference type="Proteomes" id="UP000001011">
    <property type="component" value="Chromosome"/>
</dbReference>
<dbReference type="GO" id="GO:0005737">
    <property type="term" value="C:cytoplasm"/>
    <property type="evidence" value="ECO:0007669"/>
    <property type="project" value="UniProtKB-SubCell"/>
</dbReference>
<dbReference type="GO" id="GO:0005524">
    <property type="term" value="F:ATP binding"/>
    <property type="evidence" value="ECO:0007669"/>
    <property type="project" value="UniProtKB-KW"/>
</dbReference>
<dbReference type="GO" id="GO:0004595">
    <property type="term" value="F:pantetheine-phosphate adenylyltransferase activity"/>
    <property type="evidence" value="ECO:0007669"/>
    <property type="project" value="UniProtKB-UniRule"/>
</dbReference>
<dbReference type="GO" id="GO:0015937">
    <property type="term" value="P:coenzyme A biosynthetic process"/>
    <property type="evidence" value="ECO:0007669"/>
    <property type="project" value="UniProtKB-UniRule"/>
</dbReference>
<dbReference type="CDD" id="cd02163">
    <property type="entry name" value="PPAT"/>
    <property type="match status" value="1"/>
</dbReference>
<dbReference type="FunFam" id="3.40.50.620:FF:000012">
    <property type="entry name" value="Phosphopantetheine adenylyltransferase"/>
    <property type="match status" value="1"/>
</dbReference>
<dbReference type="Gene3D" id="3.40.50.620">
    <property type="entry name" value="HUPs"/>
    <property type="match status" value="1"/>
</dbReference>
<dbReference type="HAMAP" id="MF_00151">
    <property type="entry name" value="PPAT_bact"/>
    <property type="match status" value="1"/>
</dbReference>
<dbReference type="InterPro" id="IPR004821">
    <property type="entry name" value="Cyt_trans-like"/>
</dbReference>
<dbReference type="InterPro" id="IPR001980">
    <property type="entry name" value="PPAT"/>
</dbReference>
<dbReference type="InterPro" id="IPR014729">
    <property type="entry name" value="Rossmann-like_a/b/a_fold"/>
</dbReference>
<dbReference type="NCBIfam" id="TIGR01510">
    <property type="entry name" value="coaD_prev_kdtB"/>
    <property type="match status" value="1"/>
</dbReference>
<dbReference type="NCBIfam" id="TIGR00125">
    <property type="entry name" value="cyt_tran_rel"/>
    <property type="match status" value="1"/>
</dbReference>
<dbReference type="PANTHER" id="PTHR21342">
    <property type="entry name" value="PHOSPHOPANTETHEINE ADENYLYLTRANSFERASE"/>
    <property type="match status" value="1"/>
</dbReference>
<dbReference type="PANTHER" id="PTHR21342:SF1">
    <property type="entry name" value="PHOSPHOPANTETHEINE ADENYLYLTRANSFERASE"/>
    <property type="match status" value="1"/>
</dbReference>
<dbReference type="Pfam" id="PF01467">
    <property type="entry name" value="CTP_transf_like"/>
    <property type="match status" value="1"/>
</dbReference>
<dbReference type="PRINTS" id="PR01020">
    <property type="entry name" value="LPSBIOSNTHSS"/>
</dbReference>
<dbReference type="SUPFAM" id="SSF52374">
    <property type="entry name" value="Nucleotidylyl transferase"/>
    <property type="match status" value="1"/>
</dbReference>
<feature type="chain" id="PRO_0000156316" description="Phosphopantetheine adenylyltransferase">
    <location>
        <begin position="1"/>
        <end position="159"/>
    </location>
</feature>
<feature type="binding site" evidence="1">
    <location>
        <begin position="10"/>
        <end position="11"/>
    </location>
    <ligand>
        <name>ATP</name>
        <dbReference type="ChEBI" id="CHEBI:30616"/>
    </ligand>
</feature>
<feature type="binding site" evidence="1">
    <location>
        <position position="10"/>
    </location>
    <ligand>
        <name>substrate</name>
    </ligand>
</feature>
<feature type="binding site" evidence="1">
    <location>
        <position position="18"/>
    </location>
    <ligand>
        <name>ATP</name>
        <dbReference type="ChEBI" id="CHEBI:30616"/>
    </ligand>
</feature>
<feature type="binding site" evidence="1">
    <location>
        <position position="42"/>
    </location>
    <ligand>
        <name>substrate</name>
    </ligand>
</feature>
<feature type="binding site" evidence="1">
    <location>
        <position position="74"/>
    </location>
    <ligand>
        <name>substrate</name>
    </ligand>
</feature>
<feature type="binding site" evidence="1">
    <location>
        <position position="88"/>
    </location>
    <ligand>
        <name>substrate</name>
    </ligand>
</feature>
<feature type="binding site" evidence="1">
    <location>
        <begin position="89"/>
        <end position="91"/>
    </location>
    <ligand>
        <name>ATP</name>
        <dbReference type="ChEBI" id="CHEBI:30616"/>
    </ligand>
</feature>
<feature type="binding site" evidence="1">
    <location>
        <position position="99"/>
    </location>
    <ligand>
        <name>ATP</name>
        <dbReference type="ChEBI" id="CHEBI:30616"/>
    </ligand>
</feature>
<feature type="binding site" evidence="1">
    <location>
        <begin position="124"/>
        <end position="130"/>
    </location>
    <ligand>
        <name>ATP</name>
        <dbReference type="ChEBI" id="CHEBI:30616"/>
    </ligand>
</feature>
<feature type="site" description="Transition state stabilizer" evidence="1">
    <location>
        <position position="18"/>
    </location>
</feature>